<dbReference type="EMBL" id="CP000001">
    <property type="protein sequence ID" value="AAU15946.1"/>
    <property type="molecule type" value="Genomic_DNA"/>
</dbReference>
<dbReference type="RefSeq" id="WP_001203687.1">
    <property type="nucleotide sequence ID" value="NZ_CP009968.1"/>
</dbReference>
<dbReference type="SMR" id="Q633L6"/>
<dbReference type="GeneID" id="93006530"/>
<dbReference type="KEGG" id="bcz:BCE33L4322"/>
<dbReference type="PATRIC" id="fig|288681.22.peg.1052"/>
<dbReference type="Proteomes" id="UP000002612">
    <property type="component" value="Chromosome"/>
</dbReference>
<dbReference type="GO" id="GO:0005524">
    <property type="term" value="F:ATP binding"/>
    <property type="evidence" value="ECO:0007669"/>
    <property type="project" value="UniProtKB-KW"/>
</dbReference>
<dbReference type="GO" id="GO:0003677">
    <property type="term" value="F:DNA binding"/>
    <property type="evidence" value="ECO:0007669"/>
    <property type="project" value="UniProtKB-KW"/>
</dbReference>
<dbReference type="GO" id="GO:0008270">
    <property type="term" value="F:zinc ion binding"/>
    <property type="evidence" value="ECO:0007669"/>
    <property type="project" value="UniProtKB-UniRule"/>
</dbReference>
<dbReference type="GO" id="GO:0045892">
    <property type="term" value="P:negative regulation of DNA-templated transcription"/>
    <property type="evidence" value="ECO:0007669"/>
    <property type="project" value="UniProtKB-UniRule"/>
</dbReference>
<dbReference type="HAMAP" id="MF_00440">
    <property type="entry name" value="NrdR"/>
    <property type="match status" value="1"/>
</dbReference>
<dbReference type="InterPro" id="IPR005144">
    <property type="entry name" value="ATP-cone_dom"/>
</dbReference>
<dbReference type="InterPro" id="IPR055173">
    <property type="entry name" value="NrdR-like_N"/>
</dbReference>
<dbReference type="InterPro" id="IPR003796">
    <property type="entry name" value="RNR_NrdR-like"/>
</dbReference>
<dbReference type="NCBIfam" id="TIGR00244">
    <property type="entry name" value="transcriptional regulator NrdR"/>
    <property type="match status" value="1"/>
</dbReference>
<dbReference type="PANTHER" id="PTHR30455">
    <property type="entry name" value="TRANSCRIPTIONAL REPRESSOR NRDR"/>
    <property type="match status" value="1"/>
</dbReference>
<dbReference type="PANTHER" id="PTHR30455:SF2">
    <property type="entry name" value="TRANSCRIPTIONAL REPRESSOR NRDR"/>
    <property type="match status" value="1"/>
</dbReference>
<dbReference type="Pfam" id="PF03477">
    <property type="entry name" value="ATP-cone"/>
    <property type="match status" value="1"/>
</dbReference>
<dbReference type="Pfam" id="PF22811">
    <property type="entry name" value="Zn_ribbon_NrdR"/>
    <property type="match status" value="1"/>
</dbReference>
<dbReference type="PROSITE" id="PS51161">
    <property type="entry name" value="ATP_CONE"/>
    <property type="match status" value="1"/>
</dbReference>
<organism>
    <name type="scientific">Bacillus cereus (strain ZK / E33L)</name>
    <dbReference type="NCBI Taxonomy" id="288681"/>
    <lineage>
        <taxon>Bacteria</taxon>
        <taxon>Bacillati</taxon>
        <taxon>Bacillota</taxon>
        <taxon>Bacilli</taxon>
        <taxon>Bacillales</taxon>
        <taxon>Bacillaceae</taxon>
        <taxon>Bacillus</taxon>
        <taxon>Bacillus cereus group</taxon>
    </lineage>
</organism>
<reference key="1">
    <citation type="journal article" date="2006" name="J. Bacteriol.">
        <title>Pathogenomic sequence analysis of Bacillus cereus and Bacillus thuringiensis isolates closely related to Bacillus anthracis.</title>
        <authorList>
            <person name="Han C.S."/>
            <person name="Xie G."/>
            <person name="Challacombe J.F."/>
            <person name="Altherr M.R."/>
            <person name="Bhotika S.S."/>
            <person name="Bruce D."/>
            <person name="Campbell C.S."/>
            <person name="Campbell M.L."/>
            <person name="Chen J."/>
            <person name="Chertkov O."/>
            <person name="Cleland C."/>
            <person name="Dimitrijevic M."/>
            <person name="Doggett N.A."/>
            <person name="Fawcett J.J."/>
            <person name="Glavina T."/>
            <person name="Goodwin L.A."/>
            <person name="Hill K.K."/>
            <person name="Hitchcock P."/>
            <person name="Jackson P.J."/>
            <person name="Keim P."/>
            <person name="Kewalramani A.R."/>
            <person name="Longmire J."/>
            <person name="Lucas S."/>
            <person name="Malfatti S."/>
            <person name="McMurry K."/>
            <person name="Meincke L.J."/>
            <person name="Misra M."/>
            <person name="Moseman B.L."/>
            <person name="Mundt M."/>
            <person name="Munk A.C."/>
            <person name="Okinaka R.T."/>
            <person name="Parson-Quintana B."/>
            <person name="Reilly L.P."/>
            <person name="Richardson P."/>
            <person name="Robinson D.L."/>
            <person name="Rubin E."/>
            <person name="Saunders E."/>
            <person name="Tapia R."/>
            <person name="Tesmer J.G."/>
            <person name="Thayer N."/>
            <person name="Thompson L.S."/>
            <person name="Tice H."/>
            <person name="Ticknor L.O."/>
            <person name="Wills P.L."/>
            <person name="Brettin T.S."/>
            <person name="Gilna P."/>
        </authorList>
    </citation>
    <scope>NUCLEOTIDE SEQUENCE [LARGE SCALE GENOMIC DNA]</scope>
    <source>
        <strain>ZK / E33L</strain>
    </source>
</reference>
<keyword id="KW-0067">ATP-binding</keyword>
<keyword id="KW-0238">DNA-binding</keyword>
<keyword id="KW-0479">Metal-binding</keyword>
<keyword id="KW-0547">Nucleotide-binding</keyword>
<keyword id="KW-0678">Repressor</keyword>
<keyword id="KW-0804">Transcription</keyword>
<keyword id="KW-0805">Transcription regulation</keyword>
<keyword id="KW-0862">Zinc</keyword>
<keyword id="KW-0863">Zinc-finger</keyword>
<comment type="function">
    <text evidence="1">Negatively regulates transcription of bacterial ribonucleotide reductase nrd genes and operons by binding to NrdR-boxes.</text>
</comment>
<comment type="cofactor">
    <cofactor evidence="1">
        <name>Zn(2+)</name>
        <dbReference type="ChEBI" id="CHEBI:29105"/>
    </cofactor>
    <text evidence="1">Binds 1 zinc ion.</text>
</comment>
<comment type="similarity">
    <text evidence="1">Belongs to the NrdR family.</text>
</comment>
<proteinExistence type="inferred from homology"/>
<name>NRDR_BACCZ</name>
<accession>Q633L6</accession>
<sequence length="153" mass="18024">MRCPSCSHNGTRVLDSRPVDEGRSIRRRRECESCLSRFTTFERVEESPLIVVKKEGTREEFNKEKILRGLIKACEKRPVSLRQLEEVTQSVERELRNLGISEVKSDMIGEIVMEELRDIDDVAYVRFASVYRQFKDLNVFIEELKDILQKERE</sequence>
<gene>
    <name evidence="1" type="primary">nrdR</name>
    <name type="ordered locus">BCE33L4322</name>
</gene>
<protein>
    <recommendedName>
        <fullName evidence="1">Transcriptional repressor NrdR</fullName>
    </recommendedName>
</protein>
<feature type="chain" id="PRO_0000182262" description="Transcriptional repressor NrdR">
    <location>
        <begin position="1"/>
        <end position="153"/>
    </location>
</feature>
<feature type="domain" description="ATP-cone" evidence="1">
    <location>
        <begin position="49"/>
        <end position="139"/>
    </location>
</feature>
<feature type="zinc finger region" evidence="1">
    <location>
        <begin position="3"/>
        <end position="34"/>
    </location>
</feature>
<evidence type="ECO:0000255" key="1">
    <source>
        <dbReference type="HAMAP-Rule" id="MF_00440"/>
    </source>
</evidence>